<name>RISB_SYNFM</name>
<sequence length="154" mass="16250">MKIYEGKLLAQGLRFGIVVSRFNDFIGERLLGGALDALKRSGAEEKNIDVFKVPGAFEIPLVAKKAASTGRYDAVICLGAVIRGATPHFDYVANEVSKGIAHAGLEAGVPISFGVLTTDTIEQAIERAGSKSGNKGWDAAVAAIEMANLIKQMS</sequence>
<organism>
    <name type="scientific">Syntrophobacter fumaroxidans (strain DSM 10017 / MPOB)</name>
    <dbReference type="NCBI Taxonomy" id="335543"/>
    <lineage>
        <taxon>Bacteria</taxon>
        <taxon>Pseudomonadati</taxon>
        <taxon>Thermodesulfobacteriota</taxon>
        <taxon>Syntrophobacteria</taxon>
        <taxon>Syntrophobacterales</taxon>
        <taxon>Syntrophobacteraceae</taxon>
        <taxon>Syntrophobacter</taxon>
    </lineage>
</organism>
<accession>A0LI20</accession>
<reference key="1">
    <citation type="submission" date="2006-10" db="EMBL/GenBank/DDBJ databases">
        <title>Complete sequence of Syntrophobacter fumaroxidans MPOB.</title>
        <authorList>
            <consortium name="US DOE Joint Genome Institute"/>
            <person name="Copeland A."/>
            <person name="Lucas S."/>
            <person name="Lapidus A."/>
            <person name="Barry K."/>
            <person name="Detter J.C."/>
            <person name="Glavina del Rio T."/>
            <person name="Hammon N."/>
            <person name="Israni S."/>
            <person name="Pitluck S."/>
            <person name="Goltsman E.G."/>
            <person name="Martinez M."/>
            <person name="Schmutz J."/>
            <person name="Larimer F."/>
            <person name="Land M."/>
            <person name="Hauser L."/>
            <person name="Kyrpides N."/>
            <person name="Kim E."/>
            <person name="Boone D.R."/>
            <person name="Brockman F."/>
            <person name="Culley D."/>
            <person name="Ferry J."/>
            <person name="Gunsalus R."/>
            <person name="McInerney M.J."/>
            <person name="Morrison M."/>
            <person name="Plugge C."/>
            <person name="Rohlin L."/>
            <person name="Scholten J."/>
            <person name="Sieber J."/>
            <person name="Stams A.J.M."/>
            <person name="Worm P."/>
            <person name="Henstra A.M."/>
            <person name="Richardson P."/>
        </authorList>
    </citation>
    <scope>NUCLEOTIDE SEQUENCE [LARGE SCALE GENOMIC DNA]</scope>
    <source>
        <strain>DSM 10017 / MPOB</strain>
    </source>
</reference>
<comment type="function">
    <text evidence="1">Catalyzes the formation of 6,7-dimethyl-8-ribityllumazine by condensation of 5-amino-6-(D-ribitylamino)uracil with 3,4-dihydroxy-2-butanone 4-phosphate. This is the penultimate step in the biosynthesis of riboflavin.</text>
</comment>
<comment type="catalytic activity">
    <reaction evidence="1">
        <text>(2S)-2-hydroxy-3-oxobutyl phosphate + 5-amino-6-(D-ribitylamino)uracil = 6,7-dimethyl-8-(1-D-ribityl)lumazine + phosphate + 2 H2O + H(+)</text>
        <dbReference type="Rhea" id="RHEA:26152"/>
        <dbReference type="ChEBI" id="CHEBI:15377"/>
        <dbReference type="ChEBI" id="CHEBI:15378"/>
        <dbReference type="ChEBI" id="CHEBI:15934"/>
        <dbReference type="ChEBI" id="CHEBI:43474"/>
        <dbReference type="ChEBI" id="CHEBI:58201"/>
        <dbReference type="ChEBI" id="CHEBI:58830"/>
        <dbReference type="EC" id="2.5.1.78"/>
    </reaction>
</comment>
<comment type="pathway">
    <text evidence="1">Cofactor biosynthesis; riboflavin biosynthesis; riboflavin from 2-hydroxy-3-oxobutyl phosphate and 5-amino-6-(D-ribitylamino)uracil: step 1/2.</text>
</comment>
<comment type="similarity">
    <text evidence="1">Belongs to the DMRL synthase family.</text>
</comment>
<feature type="chain" id="PRO_1000077254" description="6,7-dimethyl-8-ribityllumazine synthase">
    <location>
        <begin position="1"/>
        <end position="154"/>
    </location>
</feature>
<feature type="active site" description="Proton donor" evidence="1">
    <location>
        <position position="88"/>
    </location>
</feature>
<feature type="binding site" evidence="1">
    <location>
        <position position="22"/>
    </location>
    <ligand>
        <name>5-amino-6-(D-ribitylamino)uracil</name>
        <dbReference type="ChEBI" id="CHEBI:15934"/>
    </ligand>
</feature>
<feature type="binding site" evidence="1">
    <location>
        <begin position="56"/>
        <end position="58"/>
    </location>
    <ligand>
        <name>5-amino-6-(D-ribitylamino)uracil</name>
        <dbReference type="ChEBI" id="CHEBI:15934"/>
    </ligand>
</feature>
<feature type="binding site" evidence="1">
    <location>
        <begin position="80"/>
        <end position="82"/>
    </location>
    <ligand>
        <name>5-amino-6-(D-ribitylamino)uracil</name>
        <dbReference type="ChEBI" id="CHEBI:15934"/>
    </ligand>
</feature>
<feature type="binding site" evidence="1">
    <location>
        <begin position="85"/>
        <end position="86"/>
    </location>
    <ligand>
        <name>(2S)-2-hydroxy-3-oxobutyl phosphate</name>
        <dbReference type="ChEBI" id="CHEBI:58830"/>
    </ligand>
</feature>
<feature type="binding site" evidence="1">
    <location>
        <position position="113"/>
    </location>
    <ligand>
        <name>5-amino-6-(D-ribitylamino)uracil</name>
        <dbReference type="ChEBI" id="CHEBI:15934"/>
    </ligand>
</feature>
<feature type="binding site" evidence="1">
    <location>
        <position position="127"/>
    </location>
    <ligand>
        <name>(2S)-2-hydroxy-3-oxobutyl phosphate</name>
        <dbReference type="ChEBI" id="CHEBI:58830"/>
    </ligand>
</feature>
<dbReference type="EC" id="2.5.1.78" evidence="1"/>
<dbReference type="EMBL" id="CP000478">
    <property type="protein sequence ID" value="ABK17072.1"/>
    <property type="molecule type" value="Genomic_DNA"/>
</dbReference>
<dbReference type="RefSeq" id="WP_011698243.1">
    <property type="nucleotide sequence ID" value="NC_008554.1"/>
</dbReference>
<dbReference type="SMR" id="A0LI20"/>
<dbReference type="FunCoup" id="A0LI20">
    <property type="interactions" value="533"/>
</dbReference>
<dbReference type="STRING" id="335543.Sfum_1381"/>
<dbReference type="KEGG" id="sfu:Sfum_1381"/>
<dbReference type="eggNOG" id="COG0054">
    <property type="taxonomic scope" value="Bacteria"/>
</dbReference>
<dbReference type="HOGENOM" id="CLU_089358_1_1_7"/>
<dbReference type="InParanoid" id="A0LI20"/>
<dbReference type="OrthoDB" id="9809709at2"/>
<dbReference type="UniPathway" id="UPA00275">
    <property type="reaction ID" value="UER00404"/>
</dbReference>
<dbReference type="Proteomes" id="UP000001784">
    <property type="component" value="Chromosome"/>
</dbReference>
<dbReference type="GO" id="GO:0005829">
    <property type="term" value="C:cytosol"/>
    <property type="evidence" value="ECO:0007669"/>
    <property type="project" value="TreeGrafter"/>
</dbReference>
<dbReference type="GO" id="GO:0009349">
    <property type="term" value="C:riboflavin synthase complex"/>
    <property type="evidence" value="ECO:0007669"/>
    <property type="project" value="InterPro"/>
</dbReference>
<dbReference type="GO" id="GO:0000906">
    <property type="term" value="F:6,7-dimethyl-8-ribityllumazine synthase activity"/>
    <property type="evidence" value="ECO:0007669"/>
    <property type="project" value="UniProtKB-UniRule"/>
</dbReference>
<dbReference type="GO" id="GO:0009231">
    <property type="term" value="P:riboflavin biosynthetic process"/>
    <property type="evidence" value="ECO:0007669"/>
    <property type="project" value="UniProtKB-UniRule"/>
</dbReference>
<dbReference type="CDD" id="cd09209">
    <property type="entry name" value="Lumazine_synthase-I"/>
    <property type="match status" value="1"/>
</dbReference>
<dbReference type="FunFam" id="3.40.50.960:FF:000001">
    <property type="entry name" value="6,7-dimethyl-8-ribityllumazine synthase"/>
    <property type="match status" value="1"/>
</dbReference>
<dbReference type="Gene3D" id="3.40.50.960">
    <property type="entry name" value="Lumazine/riboflavin synthase"/>
    <property type="match status" value="1"/>
</dbReference>
<dbReference type="HAMAP" id="MF_00178">
    <property type="entry name" value="Lumazine_synth"/>
    <property type="match status" value="1"/>
</dbReference>
<dbReference type="InterPro" id="IPR034964">
    <property type="entry name" value="LS"/>
</dbReference>
<dbReference type="InterPro" id="IPR002180">
    <property type="entry name" value="LS/RS"/>
</dbReference>
<dbReference type="InterPro" id="IPR036467">
    <property type="entry name" value="LS/RS_sf"/>
</dbReference>
<dbReference type="NCBIfam" id="TIGR00114">
    <property type="entry name" value="lumazine-synth"/>
    <property type="match status" value="1"/>
</dbReference>
<dbReference type="NCBIfam" id="NF000812">
    <property type="entry name" value="PRK00061.1-4"/>
    <property type="match status" value="1"/>
</dbReference>
<dbReference type="PANTHER" id="PTHR21058:SF0">
    <property type="entry name" value="6,7-DIMETHYL-8-RIBITYLLUMAZINE SYNTHASE"/>
    <property type="match status" value="1"/>
</dbReference>
<dbReference type="PANTHER" id="PTHR21058">
    <property type="entry name" value="6,7-DIMETHYL-8-RIBITYLLUMAZINE SYNTHASE DMRL SYNTHASE LUMAZINE SYNTHASE"/>
    <property type="match status" value="1"/>
</dbReference>
<dbReference type="Pfam" id="PF00885">
    <property type="entry name" value="DMRL_synthase"/>
    <property type="match status" value="1"/>
</dbReference>
<dbReference type="SUPFAM" id="SSF52121">
    <property type="entry name" value="Lumazine synthase"/>
    <property type="match status" value="1"/>
</dbReference>
<protein>
    <recommendedName>
        <fullName evidence="1">6,7-dimethyl-8-ribityllumazine synthase</fullName>
        <shortName evidence="1">DMRL synthase</shortName>
        <shortName evidence="1">LS</shortName>
        <shortName evidence="1">Lumazine synthase</shortName>
        <ecNumber evidence="1">2.5.1.78</ecNumber>
    </recommendedName>
</protein>
<keyword id="KW-1185">Reference proteome</keyword>
<keyword id="KW-0686">Riboflavin biosynthesis</keyword>
<keyword id="KW-0808">Transferase</keyword>
<evidence type="ECO:0000255" key="1">
    <source>
        <dbReference type="HAMAP-Rule" id="MF_00178"/>
    </source>
</evidence>
<proteinExistence type="inferred from homology"/>
<gene>
    <name evidence="1" type="primary">ribH</name>
    <name type="ordered locus">Sfum_1381</name>
</gene>